<reference key="1">
    <citation type="journal article" date="2000" name="Science">
        <title>Complete genome sequence of Neisseria meningitidis serogroup B strain MC58.</title>
        <authorList>
            <person name="Tettelin H."/>
            <person name="Saunders N.J."/>
            <person name="Heidelberg J.F."/>
            <person name="Jeffries A.C."/>
            <person name="Nelson K.E."/>
            <person name="Eisen J.A."/>
            <person name="Ketchum K.A."/>
            <person name="Hood D.W."/>
            <person name="Peden J.F."/>
            <person name="Dodson R.J."/>
            <person name="Nelson W.C."/>
            <person name="Gwinn M.L."/>
            <person name="DeBoy R.T."/>
            <person name="Peterson J.D."/>
            <person name="Hickey E.K."/>
            <person name="Haft D.H."/>
            <person name="Salzberg S.L."/>
            <person name="White O."/>
            <person name="Fleischmann R.D."/>
            <person name="Dougherty B.A."/>
            <person name="Mason T.M."/>
            <person name="Ciecko A."/>
            <person name="Parksey D.S."/>
            <person name="Blair E."/>
            <person name="Cittone H."/>
            <person name="Clark E.B."/>
            <person name="Cotton M.D."/>
            <person name="Utterback T.R."/>
            <person name="Khouri H.M."/>
            <person name="Qin H."/>
            <person name="Vamathevan J.J."/>
            <person name="Gill J."/>
            <person name="Scarlato V."/>
            <person name="Masignani V."/>
            <person name="Pizza M."/>
            <person name="Grandi G."/>
            <person name="Sun L."/>
            <person name="Smith H.O."/>
            <person name="Fraser C.M."/>
            <person name="Moxon E.R."/>
            <person name="Rappuoli R."/>
            <person name="Venter J.C."/>
        </authorList>
    </citation>
    <scope>NUCLEOTIDE SEQUENCE [LARGE SCALE GENOMIC DNA]</scope>
    <source>
        <strain>ATCC BAA-335 / MC58</strain>
    </source>
</reference>
<dbReference type="EC" id="7.2.1.1" evidence="1"/>
<dbReference type="EMBL" id="AE002098">
    <property type="protein sequence ID" value="AAF40997.1"/>
    <property type="molecule type" value="Genomic_DNA"/>
</dbReference>
<dbReference type="PIR" id="D81185">
    <property type="entry name" value="D81185"/>
</dbReference>
<dbReference type="RefSeq" id="NP_273613.1">
    <property type="nucleotide sequence ID" value="NC_003112.2"/>
</dbReference>
<dbReference type="RefSeq" id="WP_002225561.1">
    <property type="nucleotide sequence ID" value="NC_003112.2"/>
</dbReference>
<dbReference type="SMR" id="Q9K0M3"/>
<dbReference type="STRING" id="122586.NMB0569"/>
<dbReference type="PaxDb" id="122586-NMB0569"/>
<dbReference type="KEGG" id="nme:NMB0569"/>
<dbReference type="PATRIC" id="fig|122586.8.peg.728"/>
<dbReference type="HOGENOM" id="CLU_046656_0_0_4"/>
<dbReference type="InParanoid" id="Q9K0M3"/>
<dbReference type="OrthoDB" id="9774536at2"/>
<dbReference type="Proteomes" id="UP000000425">
    <property type="component" value="Chromosome"/>
</dbReference>
<dbReference type="GO" id="GO:0016655">
    <property type="term" value="F:oxidoreductase activity, acting on NAD(P)H, quinone or similar compound as acceptor"/>
    <property type="evidence" value="ECO:0007669"/>
    <property type="project" value="UniProtKB-UniRule"/>
</dbReference>
<dbReference type="GO" id="GO:0006814">
    <property type="term" value="P:sodium ion transport"/>
    <property type="evidence" value="ECO:0007669"/>
    <property type="project" value="UniProtKB-UniRule"/>
</dbReference>
<dbReference type="Gene3D" id="2.40.50.100">
    <property type="match status" value="1"/>
</dbReference>
<dbReference type="HAMAP" id="MF_00425">
    <property type="entry name" value="NqrA"/>
    <property type="match status" value="1"/>
</dbReference>
<dbReference type="InterPro" id="IPR008703">
    <property type="entry name" value="NqrA"/>
</dbReference>
<dbReference type="InterPro" id="IPR056148">
    <property type="entry name" value="NQRA_2nd"/>
</dbReference>
<dbReference type="InterPro" id="IPR022615">
    <property type="entry name" value="NqrA_C_domain"/>
</dbReference>
<dbReference type="InterPro" id="IPR056147">
    <property type="entry name" value="NQRA_N"/>
</dbReference>
<dbReference type="NCBIfam" id="TIGR01936">
    <property type="entry name" value="nqrA"/>
    <property type="match status" value="1"/>
</dbReference>
<dbReference type="NCBIfam" id="NF003759">
    <property type="entry name" value="PRK05352.1-2"/>
    <property type="match status" value="1"/>
</dbReference>
<dbReference type="NCBIfam" id="NF003761">
    <property type="entry name" value="PRK05352.1-4"/>
    <property type="match status" value="1"/>
</dbReference>
<dbReference type="PANTHER" id="PTHR37839">
    <property type="entry name" value="NA(+)-TRANSLOCATING NADH-QUINONE REDUCTASE SUBUNIT A"/>
    <property type="match status" value="1"/>
</dbReference>
<dbReference type="PANTHER" id="PTHR37839:SF1">
    <property type="entry name" value="NA(+)-TRANSLOCATING NADH-QUINONE REDUCTASE SUBUNIT A"/>
    <property type="match status" value="1"/>
</dbReference>
<dbReference type="Pfam" id="PF24836">
    <property type="entry name" value="NQRA_2nd"/>
    <property type="match status" value="1"/>
</dbReference>
<dbReference type="Pfam" id="PF05896">
    <property type="entry name" value="NQRA_N"/>
    <property type="match status" value="1"/>
</dbReference>
<dbReference type="Pfam" id="PF11973">
    <property type="entry name" value="NQRA_SLBB"/>
    <property type="match status" value="1"/>
</dbReference>
<name>NQRA_NEIMB</name>
<comment type="function">
    <text evidence="1">NQR complex catalyzes the reduction of ubiquinone-1 to ubiquinol by two successive reactions, coupled with the transport of Na(+) ions from the cytoplasm to the periplasm. NqrA to NqrE are probably involved in the second step, the conversion of ubisemiquinone to ubiquinol.</text>
</comment>
<comment type="catalytic activity">
    <reaction evidence="1">
        <text>a ubiquinone + n Na(+)(in) + NADH + H(+) = a ubiquinol + n Na(+)(out) + NAD(+)</text>
        <dbReference type="Rhea" id="RHEA:47748"/>
        <dbReference type="Rhea" id="RHEA-COMP:9565"/>
        <dbReference type="Rhea" id="RHEA-COMP:9566"/>
        <dbReference type="ChEBI" id="CHEBI:15378"/>
        <dbReference type="ChEBI" id="CHEBI:16389"/>
        <dbReference type="ChEBI" id="CHEBI:17976"/>
        <dbReference type="ChEBI" id="CHEBI:29101"/>
        <dbReference type="ChEBI" id="CHEBI:57540"/>
        <dbReference type="ChEBI" id="CHEBI:57945"/>
        <dbReference type="EC" id="7.2.1.1"/>
    </reaction>
</comment>
<comment type="subunit">
    <text evidence="1">Composed of six subunits; NqrA, NqrB, NqrC, NqrD, NqrE and NqrF.</text>
</comment>
<comment type="similarity">
    <text evidence="1">Belongs to the NqrA family.</text>
</comment>
<feature type="chain" id="PRO_0000214200" description="Na(+)-translocating NADH-quinone reductase subunit A">
    <location>
        <begin position="1"/>
        <end position="447"/>
    </location>
</feature>
<gene>
    <name evidence="1" type="primary">nqrA</name>
    <name type="ordered locus">NMB0569</name>
</gene>
<proteinExistence type="inferred from homology"/>
<protein>
    <recommendedName>
        <fullName evidence="1">Na(+)-translocating NADH-quinone reductase subunit A</fullName>
        <shortName evidence="1">Na(+)-NQR subunit A</shortName>
        <shortName evidence="1">Na(+)-translocating NQR subunit A</shortName>
        <ecNumber evidence="1">7.2.1.1</ecNumber>
    </recommendedName>
    <alternativeName>
        <fullName evidence="1">NQR complex subunit A</fullName>
    </alternativeName>
    <alternativeName>
        <fullName evidence="1">NQR-1 subunit A</fullName>
    </alternativeName>
</protein>
<sequence length="447" mass="48636">MIKIKKGLNLPIAGRPEQAVYDGPAITEVALLGEEYAGMRPSMKVKEGDAVKKGQVLFEDKKNPGVVFTAPASGKIAAIHRGEKRVLQSVVIAVEGNDEIEFERYAPEALANLSGEEVRRNLIQSGLWTALRTRPFSKIPAVDAEPFAIFVNAMDTNPLAADPTVIIKEAAEDFKRGLLVLSRLTERKIHVCKAAGADVPSENAANIETHEFGGPHPAGLSGTHIHFIEPVGANKTVWTINYQDVITIGRLFATGRLNTERVIALGGSQVNKPRLLRTVLGAKVSQITAGELVDTDNRVISGSVLNGAITQGAHDYLGRYHNQISVIEEGRSKELFGWVAPQPDKYSITRTTLGHFLKNKLFKFNTAVNGGDRAMVPIGTYERVMPLDILPTLLLRDLIVGDTDSAQALGCLELDEEDLALCSFVCPGKYEYGPLLRKVLETIEKEG</sequence>
<organism>
    <name type="scientific">Neisseria meningitidis serogroup B (strain ATCC BAA-335 / MC58)</name>
    <dbReference type="NCBI Taxonomy" id="122586"/>
    <lineage>
        <taxon>Bacteria</taxon>
        <taxon>Pseudomonadati</taxon>
        <taxon>Pseudomonadota</taxon>
        <taxon>Betaproteobacteria</taxon>
        <taxon>Neisseriales</taxon>
        <taxon>Neisseriaceae</taxon>
        <taxon>Neisseria</taxon>
    </lineage>
</organism>
<evidence type="ECO:0000255" key="1">
    <source>
        <dbReference type="HAMAP-Rule" id="MF_00425"/>
    </source>
</evidence>
<accession>Q9K0M3</accession>
<keyword id="KW-0406">Ion transport</keyword>
<keyword id="KW-0520">NAD</keyword>
<keyword id="KW-1185">Reference proteome</keyword>
<keyword id="KW-0915">Sodium</keyword>
<keyword id="KW-0739">Sodium transport</keyword>
<keyword id="KW-1278">Translocase</keyword>
<keyword id="KW-0813">Transport</keyword>
<keyword id="KW-0830">Ubiquinone</keyword>